<reference key="1">
    <citation type="journal article" date="2009" name="PLoS ONE">
        <title>Genome sequence of the pathogenic intestinal spirochete Brachyspira hyodysenteriae reveals adaptations to its lifestyle in the porcine large intestine.</title>
        <authorList>
            <person name="Bellgard M.I."/>
            <person name="Wanchanthuek P."/>
            <person name="La T."/>
            <person name="Ryan K."/>
            <person name="Moolhuijzen P."/>
            <person name="Albertyn Z."/>
            <person name="Shaban B."/>
            <person name="Motro Y."/>
            <person name="Dunn D.S."/>
            <person name="Schibeci D."/>
            <person name="Hunter A."/>
            <person name="Barrero R."/>
            <person name="Phillips N.D."/>
            <person name="Hampson D.J."/>
        </authorList>
    </citation>
    <scope>NUCLEOTIDE SEQUENCE [LARGE SCALE GENOMIC DNA]</scope>
    <source>
        <strain>ATCC 49526 / WA1</strain>
    </source>
</reference>
<comment type="function">
    <text evidence="1">Catalyzes the attachment of proline to tRNA(Pro) in a two-step reaction: proline is first activated by ATP to form Pro-AMP and then transferred to the acceptor end of tRNA(Pro). As ProRS can inadvertently accommodate and process non-cognate amino acids such as alanine and cysteine, to avoid such errors it has two additional distinct editing activities against alanine. One activity is designated as 'pretransfer' editing and involves the tRNA(Pro)-independent hydrolysis of activated Ala-AMP. The other activity is designated 'posttransfer' editing and involves deacylation of mischarged Ala-tRNA(Pro). The misacylated Cys-tRNA(Pro) is not edited by ProRS.</text>
</comment>
<comment type="catalytic activity">
    <reaction evidence="1">
        <text>tRNA(Pro) + L-proline + ATP = L-prolyl-tRNA(Pro) + AMP + diphosphate</text>
        <dbReference type="Rhea" id="RHEA:14305"/>
        <dbReference type="Rhea" id="RHEA-COMP:9700"/>
        <dbReference type="Rhea" id="RHEA-COMP:9702"/>
        <dbReference type="ChEBI" id="CHEBI:30616"/>
        <dbReference type="ChEBI" id="CHEBI:33019"/>
        <dbReference type="ChEBI" id="CHEBI:60039"/>
        <dbReference type="ChEBI" id="CHEBI:78442"/>
        <dbReference type="ChEBI" id="CHEBI:78532"/>
        <dbReference type="ChEBI" id="CHEBI:456215"/>
        <dbReference type="EC" id="6.1.1.15"/>
    </reaction>
</comment>
<comment type="subunit">
    <text evidence="1">Homodimer.</text>
</comment>
<comment type="subcellular location">
    <subcellularLocation>
        <location evidence="1">Cytoplasm</location>
    </subcellularLocation>
</comment>
<comment type="domain">
    <text evidence="1">Consists of three domains: the N-terminal catalytic domain, the editing domain and the C-terminal anticodon-binding domain.</text>
</comment>
<comment type="similarity">
    <text evidence="1">Belongs to the class-II aminoacyl-tRNA synthetase family. ProS type 1 subfamily.</text>
</comment>
<evidence type="ECO:0000255" key="1">
    <source>
        <dbReference type="HAMAP-Rule" id="MF_01569"/>
    </source>
</evidence>
<organism>
    <name type="scientific">Brachyspira hyodysenteriae (strain ATCC 49526 / WA1)</name>
    <dbReference type="NCBI Taxonomy" id="565034"/>
    <lineage>
        <taxon>Bacteria</taxon>
        <taxon>Pseudomonadati</taxon>
        <taxon>Spirochaetota</taxon>
        <taxon>Spirochaetia</taxon>
        <taxon>Brachyspirales</taxon>
        <taxon>Brachyspiraceae</taxon>
        <taxon>Brachyspira</taxon>
    </lineage>
</organism>
<keyword id="KW-0030">Aminoacyl-tRNA synthetase</keyword>
<keyword id="KW-0067">ATP-binding</keyword>
<keyword id="KW-0963">Cytoplasm</keyword>
<keyword id="KW-0436">Ligase</keyword>
<keyword id="KW-0547">Nucleotide-binding</keyword>
<keyword id="KW-0648">Protein biosynthesis</keyword>
<dbReference type="EC" id="6.1.1.15" evidence="1"/>
<dbReference type="EMBL" id="CP001357">
    <property type="protein sequence ID" value="ACN82970.1"/>
    <property type="molecule type" value="Genomic_DNA"/>
</dbReference>
<dbReference type="RefSeq" id="WP_012670022.1">
    <property type="nucleotide sequence ID" value="NC_012225.1"/>
</dbReference>
<dbReference type="SMR" id="C0QY98"/>
<dbReference type="STRING" id="565034.BHWA1_00474"/>
<dbReference type="KEGG" id="bhy:BHWA1_00474"/>
<dbReference type="eggNOG" id="COG0442">
    <property type="taxonomic scope" value="Bacteria"/>
</dbReference>
<dbReference type="HOGENOM" id="CLU_016739_0_0_12"/>
<dbReference type="Proteomes" id="UP000001803">
    <property type="component" value="Chromosome"/>
</dbReference>
<dbReference type="GO" id="GO:0005829">
    <property type="term" value="C:cytosol"/>
    <property type="evidence" value="ECO:0007669"/>
    <property type="project" value="TreeGrafter"/>
</dbReference>
<dbReference type="GO" id="GO:0002161">
    <property type="term" value="F:aminoacyl-tRNA deacylase activity"/>
    <property type="evidence" value="ECO:0007669"/>
    <property type="project" value="InterPro"/>
</dbReference>
<dbReference type="GO" id="GO:0005524">
    <property type="term" value="F:ATP binding"/>
    <property type="evidence" value="ECO:0007669"/>
    <property type="project" value="UniProtKB-UniRule"/>
</dbReference>
<dbReference type="GO" id="GO:0004827">
    <property type="term" value="F:proline-tRNA ligase activity"/>
    <property type="evidence" value="ECO:0007669"/>
    <property type="project" value="UniProtKB-UniRule"/>
</dbReference>
<dbReference type="GO" id="GO:0006433">
    <property type="term" value="P:prolyl-tRNA aminoacylation"/>
    <property type="evidence" value="ECO:0007669"/>
    <property type="project" value="UniProtKB-UniRule"/>
</dbReference>
<dbReference type="CDD" id="cd04334">
    <property type="entry name" value="ProRS-INS"/>
    <property type="match status" value="1"/>
</dbReference>
<dbReference type="CDD" id="cd00861">
    <property type="entry name" value="ProRS_anticodon_short"/>
    <property type="match status" value="1"/>
</dbReference>
<dbReference type="CDD" id="cd00779">
    <property type="entry name" value="ProRS_core_prok"/>
    <property type="match status" value="1"/>
</dbReference>
<dbReference type="Gene3D" id="3.40.50.800">
    <property type="entry name" value="Anticodon-binding domain"/>
    <property type="match status" value="1"/>
</dbReference>
<dbReference type="Gene3D" id="3.30.930.10">
    <property type="entry name" value="Bira Bifunctional Protein, Domain 2"/>
    <property type="match status" value="2"/>
</dbReference>
<dbReference type="HAMAP" id="MF_01569">
    <property type="entry name" value="Pro_tRNA_synth_type1"/>
    <property type="match status" value="1"/>
</dbReference>
<dbReference type="InterPro" id="IPR002314">
    <property type="entry name" value="aa-tRNA-synt_IIb"/>
</dbReference>
<dbReference type="InterPro" id="IPR006195">
    <property type="entry name" value="aa-tRNA-synth_II"/>
</dbReference>
<dbReference type="InterPro" id="IPR045864">
    <property type="entry name" value="aa-tRNA-synth_II/BPL/LPL"/>
</dbReference>
<dbReference type="InterPro" id="IPR004154">
    <property type="entry name" value="Anticodon-bd"/>
</dbReference>
<dbReference type="InterPro" id="IPR036621">
    <property type="entry name" value="Anticodon-bd_dom_sf"/>
</dbReference>
<dbReference type="InterPro" id="IPR002316">
    <property type="entry name" value="Pro-tRNA-ligase_IIa"/>
</dbReference>
<dbReference type="InterPro" id="IPR004500">
    <property type="entry name" value="Pro-tRNA-synth_IIa_bac-type"/>
</dbReference>
<dbReference type="InterPro" id="IPR023717">
    <property type="entry name" value="Pro-tRNA-Synthase_IIa_type1"/>
</dbReference>
<dbReference type="InterPro" id="IPR050062">
    <property type="entry name" value="Pro-tRNA_synthetase"/>
</dbReference>
<dbReference type="InterPro" id="IPR044140">
    <property type="entry name" value="ProRS_anticodon_short"/>
</dbReference>
<dbReference type="InterPro" id="IPR033730">
    <property type="entry name" value="ProRS_core_prok"/>
</dbReference>
<dbReference type="InterPro" id="IPR036754">
    <property type="entry name" value="YbaK/aa-tRNA-synt-asso_dom_sf"/>
</dbReference>
<dbReference type="InterPro" id="IPR007214">
    <property type="entry name" value="YbaK/aa-tRNA-synth-assoc-dom"/>
</dbReference>
<dbReference type="NCBIfam" id="NF006625">
    <property type="entry name" value="PRK09194.1"/>
    <property type="match status" value="1"/>
</dbReference>
<dbReference type="NCBIfam" id="TIGR00409">
    <property type="entry name" value="proS_fam_II"/>
    <property type="match status" value="1"/>
</dbReference>
<dbReference type="PANTHER" id="PTHR42753">
    <property type="entry name" value="MITOCHONDRIAL RIBOSOME PROTEIN L39/PROLYL-TRNA LIGASE FAMILY MEMBER"/>
    <property type="match status" value="1"/>
</dbReference>
<dbReference type="PANTHER" id="PTHR42753:SF2">
    <property type="entry name" value="PROLINE--TRNA LIGASE"/>
    <property type="match status" value="1"/>
</dbReference>
<dbReference type="Pfam" id="PF03129">
    <property type="entry name" value="HGTP_anticodon"/>
    <property type="match status" value="1"/>
</dbReference>
<dbReference type="Pfam" id="PF00587">
    <property type="entry name" value="tRNA-synt_2b"/>
    <property type="match status" value="1"/>
</dbReference>
<dbReference type="Pfam" id="PF04073">
    <property type="entry name" value="tRNA_edit"/>
    <property type="match status" value="1"/>
</dbReference>
<dbReference type="PRINTS" id="PR01046">
    <property type="entry name" value="TRNASYNTHPRO"/>
</dbReference>
<dbReference type="SUPFAM" id="SSF52954">
    <property type="entry name" value="Class II aaRS ABD-related"/>
    <property type="match status" value="1"/>
</dbReference>
<dbReference type="SUPFAM" id="SSF55681">
    <property type="entry name" value="Class II aaRS and biotin synthetases"/>
    <property type="match status" value="1"/>
</dbReference>
<dbReference type="SUPFAM" id="SSF55826">
    <property type="entry name" value="YbaK/ProRS associated domain"/>
    <property type="match status" value="1"/>
</dbReference>
<dbReference type="PROSITE" id="PS50862">
    <property type="entry name" value="AA_TRNA_LIGASE_II"/>
    <property type="match status" value="1"/>
</dbReference>
<sequence>MRLSKLFMPTLKEAPSDAIIASNKLMLRAALARKISNGLYSYLPLGVRVLNKISNIIREEMDAIGSNECIMPILVSKELLTPSGRWERFKKELFRLKDRNDVDMAMGPTHEEAFTITAQNEIQSYKDFPLTLYQIHTKFRDEIRPRFGVIRSKEFTMKDAYSFHITKECLDKTYNDMSGAYTKIFKRMGLDTVSVKADSGAMGGEGSEEFMVLSEVGEETIIFCSKCDYRANVEKANVKEEEAAKSYTDKALEEVHTPDIKTINDLEKFFNTSSKNFIKSIIYKTEEDEIILVAIRGDLEINETKLSNALGGLDIELADEETVKEVTGARVGFASPIGLKKKIRIFADNSIKSVADAIVGGNKDDTHIKNVNIERDFNIDVWGDFRTAKEGDRCPQCGETLYQKKGLELGHIFKLGDKYTEAFNFKVLDENNKEITPIMGCYGIGVNRALASVIEQNYDDKGIIFPISVAPYEAIVVAIDKETEDSFKKAEEIYNTLNSIGVETMFDDRKERLGVKLNDCDLIGIPIRIIVGKKSLQKGVVEFKLRKSQESVEVKVEDIIEYVKTKKQELFNEINSRL</sequence>
<proteinExistence type="inferred from homology"/>
<gene>
    <name evidence="1" type="primary">proS</name>
    <name type="ordered locus">BHWA1_00474</name>
</gene>
<accession>C0QY98</accession>
<feature type="chain" id="PRO_1000185489" description="Proline--tRNA ligase">
    <location>
        <begin position="1"/>
        <end position="578"/>
    </location>
</feature>
<protein>
    <recommendedName>
        <fullName evidence="1">Proline--tRNA ligase</fullName>
        <ecNumber evidence="1">6.1.1.15</ecNumber>
    </recommendedName>
    <alternativeName>
        <fullName evidence="1">Prolyl-tRNA synthetase</fullName>
        <shortName evidence="1">ProRS</shortName>
    </alternativeName>
</protein>
<name>SYP_BRAHW</name>